<comment type="similarity">
    <text evidence="1">Belongs to the MG439/MG440 family.</text>
</comment>
<protein>
    <recommendedName>
        <fullName>Uncharacterized protein MPN_148</fullName>
    </recommendedName>
</protein>
<keyword id="KW-1185">Reference proteome</keyword>
<organism>
    <name type="scientific">Mycoplasma pneumoniae (strain ATCC 29342 / M129 / Subtype 1)</name>
    <name type="common">Mycoplasmoides pneumoniae</name>
    <dbReference type="NCBI Taxonomy" id="272634"/>
    <lineage>
        <taxon>Bacteria</taxon>
        <taxon>Bacillati</taxon>
        <taxon>Mycoplasmatota</taxon>
        <taxon>Mycoplasmoidales</taxon>
        <taxon>Mycoplasmoidaceae</taxon>
        <taxon>Mycoplasmoides</taxon>
    </lineage>
</organism>
<name>Y148_MYCPN</name>
<sequence>MERKVDHFQMTYQSFKDLSIKAKLSYTFNWFGDYSSGGFTAKKGDKHYFDLFLKIKPDPNKSFKAANFKTEEKNSTAIDGQETTRNLEWIEFGASISWSLKGKDDASEKSVKQFLDSYANNTSGYSSDINLFSYLEYLIR</sequence>
<accession>P75138</accession>
<proteinExistence type="inferred from homology"/>
<gene>
    <name type="ordered locus">MPN_148</name>
    <name type="ORF">E07_orf140</name>
    <name type="ORF">MP006</name>
</gene>
<feature type="chain" id="PRO_0000210654" description="Uncharacterized protein MPN_148">
    <location>
        <begin position="1"/>
        <end position="140"/>
    </location>
</feature>
<evidence type="ECO:0000305" key="1"/>
<reference key="1">
    <citation type="journal article" date="1996" name="Nucleic Acids Res.">
        <title>Complete sequence analysis of the genome of the bacterium Mycoplasma pneumoniae.</title>
        <authorList>
            <person name="Himmelreich R."/>
            <person name="Hilbert H."/>
            <person name="Plagens H."/>
            <person name="Pirkl E."/>
            <person name="Li B.-C."/>
            <person name="Herrmann R."/>
        </authorList>
    </citation>
    <scope>NUCLEOTIDE SEQUENCE [LARGE SCALE GENOMIC DNA]</scope>
    <source>
        <strain>ATCC 29342 / M129 / Subtype 1</strain>
    </source>
</reference>
<dbReference type="EMBL" id="U00089">
    <property type="protein sequence ID" value="AAB95654.1"/>
    <property type="molecule type" value="Genomic_DNA"/>
</dbReference>
<dbReference type="PIR" id="S73332">
    <property type="entry name" value="S73332"/>
</dbReference>
<dbReference type="STRING" id="272634.MPN_148"/>
<dbReference type="EnsemblBacteria" id="AAB95654">
    <property type="protein sequence ID" value="AAB95654"/>
    <property type="gene ID" value="MPN_148"/>
</dbReference>
<dbReference type="KEGG" id="mpn:MPN_148"/>
<dbReference type="HOGENOM" id="CLU_152513_0_0_14"/>
<dbReference type="Proteomes" id="UP000000808">
    <property type="component" value="Chromosome"/>
</dbReference>